<protein>
    <recommendedName>
        <fullName evidence="1">Flap endonuclease 1</fullName>
        <shortName evidence="1">FEN-1</shortName>
        <ecNumber evidence="1">3.1.-.-</ecNumber>
    </recommendedName>
    <alternativeName>
        <fullName evidence="1">Flap structure-specific endonuclease 1</fullName>
    </alternativeName>
</protein>
<sequence>MGIQGLAKLLGDIAPSGIKENEIKNYFGRKIAIDASMSIYQFLIAVRSDGSQLTNEAGETTSHLMGLFYRTIRMVENGIKPVYVFDGKPPQLKSGELAKRTERREEAQKALSKAEEAGDTENIDKFSRRLVRVTKEHNEECKQLLKLMGIPYVEAPCEAEAQCAALVKSGKVYATGTEDMDALTFGTTVMLRHLTFSEAKKMPIKEFHLQNVLSEAGLSQDEFIDLCILLGCDYCDSIKGIGPKRSVDLIRQHRSIDKILENIDTSKHPPPENWLYKEARELFKNPEVRNPEEIELKWEEPNEEALVTFMCQEKGFSEDRIRSGIKKLTKARHGSTQGRLDSFFKVLPSPANKRKLQDGKGSQNKKAKTGGKFKRPK</sequence>
<keyword id="KW-0227">DNA damage</keyword>
<keyword id="KW-0234">DNA repair</keyword>
<keyword id="KW-0235">DNA replication</keyword>
<keyword id="KW-0255">Endonuclease</keyword>
<keyword id="KW-0269">Exonuclease</keyword>
<keyword id="KW-0378">Hydrolase</keyword>
<keyword id="KW-0460">Magnesium</keyword>
<keyword id="KW-0479">Metal-binding</keyword>
<keyword id="KW-0496">Mitochondrion</keyword>
<keyword id="KW-0540">Nuclease</keyword>
<keyword id="KW-0539">Nucleus</keyword>
<keyword id="KW-0597">Phosphoprotein</keyword>
<keyword id="KW-1185">Reference proteome</keyword>
<proteinExistence type="inferred from homology"/>
<dbReference type="EC" id="3.1.-.-" evidence="1"/>
<dbReference type="EMBL" id="DS469531">
    <property type="protein sequence ID" value="EDO45961.1"/>
    <property type="molecule type" value="Genomic_DNA"/>
</dbReference>
<dbReference type="SMR" id="A7RRJ0"/>
<dbReference type="FunCoup" id="A7RRJ0">
    <property type="interactions" value="810"/>
</dbReference>
<dbReference type="STRING" id="45351.A7RRJ0"/>
<dbReference type="EnsemblMetazoa" id="EDO45961">
    <property type="protein sequence ID" value="EDO45961"/>
    <property type="gene ID" value="NEMVEDRAFT_v1g201054"/>
</dbReference>
<dbReference type="GeneID" id="5518046"/>
<dbReference type="KEGG" id="nve:5518046"/>
<dbReference type="eggNOG" id="KOG2519">
    <property type="taxonomic scope" value="Eukaryota"/>
</dbReference>
<dbReference type="HOGENOM" id="CLU_032444_2_0_1"/>
<dbReference type="InParanoid" id="A7RRJ0"/>
<dbReference type="OMA" id="MGIPWVQ"/>
<dbReference type="OrthoDB" id="1937206at2759"/>
<dbReference type="PhylomeDB" id="A7RRJ0"/>
<dbReference type="Proteomes" id="UP000001593">
    <property type="component" value="Unassembled WGS sequence"/>
</dbReference>
<dbReference type="GO" id="GO:0005739">
    <property type="term" value="C:mitochondrion"/>
    <property type="evidence" value="ECO:0007669"/>
    <property type="project" value="UniProtKB-SubCell"/>
</dbReference>
<dbReference type="GO" id="GO:0005730">
    <property type="term" value="C:nucleolus"/>
    <property type="evidence" value="ECO:0007669"/>
    <property type="project" value="UniProtKB-SubCell"/>
</dbReference>
<dbReference type="GO" id="GO:0005654">
    <property type="term" value="C:nucleoplasm"/>
    <property type="evidence" value="ECO:0007669"/>
    <property type="project" value="UniProtKB-SubCell"/>
</dbReference>
<dbReference type="GO" id="GO:0005634">
    <property type="term" value="C:nucleus"/>
    <property type="evidence" value="ECO:0000318"/>
    <property type="project" value="GO_Central"/>
</dbReference>
<dbReference type="GO" id="GO:0008409">
    <property type="term" value="F:5'-3' exonuclease activity"/>
    <property type="evidence" value="ECO:0000318"/>
    <property type="project" value="GO_Central"/>
</dbReference>
<dbReference type="GO" id="GO:0017108">
    <property type="term" value="F:5'-flap endonuclease activity"/>
    <property type="evidence" value="ECO:0000318"/>
    <property type="project" value="GO_Central"/>
</dbReference>
<dbReference type="GO" id="GO:0003677">
    <property type="term" value="F:DNA binding"/>
    <property type="evidence" value="ECO:0007669"/>
    <property type="project" value="UniProtKB-UniRule"/>
</dbReference>
<dbReference type="GO" id="GO:0000287">
    <property type="term" value="F:magnesium ion binding"/>
    <property type="evidence" value="ECO:0000318"/>
    <property type="project" value="GO_Central"/>
</dbReference>
<dbReference type="GO" id="GO:0030145">
    <property type="term" value="F:manganese ion binding"/>
    <property type="evidence" value="ECO:0000318"/>
    <property type="project" value="GO_Central"/>
</dbReference>
<dbReference type="GO" id="GO:0004523">
    <property type="term" value="F:RNA-DNA hybrid ribonuclease activity"/>
    <property type="evidence" value="ECO:0000318"/>
    <property type="project" value="GO_Central"/>
</dbReference>
<dbReference type="GO" id="GO:0006284">
    <property type="term" value="P:base-excision repair"/>
    <property type="evidence" value="ECO:0007669"/>
    <property type="project" value="UniProtKB-UniRule"/>
</dbReference>
<dbReference type="GO" id="GO:0043137">
    <property type="term" value="P:DNA replication, removal of RNA primer"/>
    <property type="evidence" value="ECO:0007669"/>
    <property type="project" value="UniProtKB-UniRule"/>
</dbReference>
<dbReference type="CDD" id="cd09907">
    <property type="entry name" value="H3TH_FEN1-Euk"/>
    <property type="match status" value="1"/>
</dbReference>
<dbReference type="CDD" id="cd09867">
    <property type="entry name" value="PIN_FEN1"/>
    <property type="match status" value="1"/>
</dbReference>
<dbReference type="FunFam" id="1.10.150.20:FF:000009">
    <property type="entry name" value="Flap endonuclease 1"/>
    <property type="match status" value="1"/>
</dbReference>
<dbReference type="FunFam" id="3.40.50.1010:FF:000003">
    <property type="entry name" value="Flap endonuclease 1"/>
    <property type="match status" value="1"/>
</dbReference>
<dbReference type="Gene3D" id="1.10.150.20">
    <property type="entry name" value="5' to 3' exonuclease, C-terminal subdomain"/>
    <property type="match status" value="1"/>
</dbReference>
<dbReference type="Gene3D" id="3.40.50.1010">
    <property type="entry name" value="5'-nuclease"/>
    <property type="match status" value="1"/>
</dbReference>
<dbReference type="HAMAP" id="MF_00614">
    <property type="entry name" value="Fen"/>
    <property type="match status" value="1"/>
</dbReference>
<dbReference type="InterPro" id="IPR036279">
    <property type="entry name" value="5-3_exonuclease_C_sf"/>
</dbReference>
<dbReference type="InterPro" id="IPR023426">
    <property type="entry name" value="Flap_endonuc"/>
</dbReference>
<dbReference type="InterPro" id="IPR008918">
    <property type="entry name" value="HhH2"/>
</dbReference>
<dbReference type="InterPro" id="IPR029060">
    <property type="entry name" value="PIN-like_dom_sf"/>
</dbReference>
<dbReference type="InterPro" id="IPR006086">
    <property type="entry name" value="XPG-I_dom"/>
</dbReference>
<dbReference type="InterPro" id="IPR006084">
    <property type="entry name" value="XPG/Rad2"/>
</dbReference>
<dbReference type="InterPro" id="IPR019974">
    <property type="entry name" value="XPG_CS"/>
</dbReference>
<dbReference type="InterPro" id="IPR006085">
    <property type="entry name" value="XPG_DNA_repair_N"/>
</dbReference>
<dbReference type="PANTHER" id="PTHR11081:SF9">
    <property type="entry name" value="FLAP ENDONUCLEASE 1"/>
    <property type="match status" value="1"/>
</dbReference>
<dbReference type="PANTHER" id="PTHR11081">
    <property type="entry name" value="FLAP ENDONUCLEASE FAMILY MEMBER"/>
    <property type="match status" value="1"/>
</dbReference>
<dbReference type="Pfam" id="PF00867">
    <property type="entry name" value="XPG_I"/>
    <property type="match status" value="1"/>
</dbReference>
<dbReference type="Pfam" id="PF00752">
    <property type="entry name" value="XPG_N"/>
    <property type="match status" value="1"/>
</dbReference>
<dbReference type="PRINTS" id="PR00853">
    <property type="entry name" value="XPGRADSUPER"/>
</dbReference>
<dbReference type="SMART" id="SM00279">
    <property type="entry name" value="HhH2"/>
    <property type="match status" value="1"/>
</dbReference>
<dbReference type="SMART" id="SM00484">
    <property type="entry name" value="XPGI"/>
    <property type="match status" value="1"/>
</dbReference>
<dbReference type="SMART" id="SM00485">
    <property type="entry name" value="XPGN"/>
    <property type="match status" value="1"/>
</dbReference>
<dbReference type="SUPFAM" id="SSF47807">
    <property type="entry name" value="5' to 3' exonuclease, C-terminal subdomain"/>
    <property type="match status" value="1"/>
</dbReference>
<dbReference type="SUPFAM" id="SSF88723">
    <property type="entry name" value="PIN domain-like"/>
    <property type="match status" value="1"/>
</dbReference>
<dbReference type="PROSITE" id="PS00841">
    <property type="entry name" value="XPG_1"/>
    <property type="match status" value="1"/>
</dbReference>
<dbReference type="PROSITE" id="PS00842">
    <property type="entry name" value="XPG_2"/>
    <property type="match status" value="1"/>
</dbReference>
<accession>A7RRJ0</accession>
<feature type="chain" id="PRO_0000403510" description="Flap endonuclease 1">
    <location>
        <begin position="1"/>
        <end position="377"/>
    </location>
</feature>
<feature type="region of interest" description="N-domain">
    <location>
        <begin position="1"/>
        <end position="104"/>
    </location>
</feature>
<feature type="region of interest" description="I-domain">
    <location>
        <begin position="122"/>
        <end position="253"/>
    </location>
</feature>
<feature type="region of interest" description="Interaction with PCNA" evidence="1">
    <location>
        <begin position="336"/>
        <end position="344"/>
    </location>
</feature>
<feature type="region of interest" description="Disordered" evidence="2">
    <location>
        <begin position="337"/>
        <end position="377"/>
    </location>
</feature>
<feature type="compositionally biased region" description="Basic residues" evidence="2">
    <location>
        <begin position="363"/>
        <end position="377"/>
    </location>
</feature>
<feature type="binding site" evidence="1">
    <location>
        <position position="34"/>
    </location>
    <ligand>
        <name>Mg(2+)</name>
        <dbReference type="ChEBI" id="CHEBI:18420"/>
        <label>1</label>
    </ligand>
</feature>
<feature type="binding site" evidence="1">
    <location>
        <position position="47"/>
    </location>
    <ligand>
        <name>DNA</name>
        <dbReference type="ChEBI" id="CHEBI:16991"/>
    </ligand>
</feature>
<feature type="binding site" evidence="1">
    <location>
        <position position="70"/>
    </location>
    <ligand>
        <name>DNA</name>
        <dbReference type="ChEBI" id="CHEBI:16991"/>
    </ligand>
</feature>
<feature type="binding site" evidence="1">
    <location>
        <position position="86"/>
    </location>
    <ligand>
        <name>Mg(2+)</name>
        <dbReference type="ChEBI" id="CHEBI:18420"/>
        <label>1</label>
    </ligand>
</feature>
<feature type="binding site" evidence="1">
    <location>
        <position position="158"/>
    </location>
    <ligand>
        <name>DNA</name>
        <dbReference type="ChEBI" id="CHEBI:16991"/>
    </ligand>
</feature>
<feature type="binding site" evidence="1">
    <location>
        <position position="158"/>
    </location>
    <ligand>
        <name>Mg(2+)</name>
        <dbReference type="ChEBI" id="CHEBI:18420"/>
        <label>1</label>
    </ligand>
</feature>
<feature type="binding site" evidence="1">
    <location>
        <position position="160"/>
    </location>
    <ligand>
        <name>Mg(2+)</name>
        <dbReference type="ChEBI" id="CHEBI:18420"/>
        <label>1</label>
    </ligand>
</feature>
<feature type="binding site" evidence="1">
    <location>
        <position position="179"/>
    </location>
    <ligand>
        <name>Mg(2+)</name>
        <dbReference type="ChEBI" id="CHEBI:18420"/>
        <label>2</label>
    </ligand>
</feature>
<feature type="binding site" evidence="1">
    <location>
        <position position="181"/>
    </location>
    <ligand>
        <name>Mg(2+)</name>
        <dbReference type="ChEBI" id="CHEBI:18420"/>
        <label>2</label>
    </ligand>
</feature>
<feature type="binding site" evidence="1">
    <location>
        <position position="231"/>
    </location>
    <ligand>
        <name>DNA</name>
        <dbReference type="ChEBI" id="CHEBI:16991"/>
    </ligand>
</feature>
<feature type="binding site" evidence="1">
    <location>
        <position position="233"/>
    </location>
    <ligand>
        <name>DNA</name>
        <dbReference type="ChEBI" id="CHEBI:16991"/>
    </ligand>
</feature>
<feature type="binding site" evidence="1">
    <location>
        <position position="233"/>
    </location>
    <ligand>
        <name>Mg(2+)</name>
        <dbReference type="ChEBI" id="CHEBI:18420"/>
        <label>2</label>
    </ligand>
</feature>
<comment type="function">
    <text evidence="1">Structure-specific nuclease with 5'-flap endonuclease and 5'-3' exonuclease activities involved in DNA replication and repair. During DNA replication, cleaves the 5'-overhanging flap structure that is generated by displacement synthesis when DNA polymerase encounters the 5'-end of a downstream Okazaki fragment. It enters the flap from the 5'-end and then tracks to cleave the flap base, leaving a nick for ligation. Also involved in the long patch base excision repair (LP-BER) pathway, by cleaving within the apurinic/apyrimidinic (AP) site-terminated flap. Acts as a genome stabilization factor that prevents flaps from equilibrating into structures that lead to duplications and deletions. Also possesses 5'-3' exonuclease activity on nicked or gapped double-stranded DNA, and exhibits RNase H activity. Also involved in replication and repair of rDNA and in repairing mitochondrial DNA.</text>
</comment>
<comment type="cofactor">
    <cofactor evidence="1">
        <name>Mg(2+)</name>
        <dbReference type="ChEBI" id="CHEBI:18420"/>
    </cofactor>
    <text evidence="1">Binds 2 magnesium ions per subunit. They probably participate in the reaction catalyzed by the enzyme. May bind an additional third magnesium ion after substrate binding.</text>
</comment>
<comment type="subunit">
    <text evidence="1">Interacts with PCNA. Three molecules of FEN1 bind to one PCNA trimer with each molecule binding to one PCNA monomer. PCNA stimulates the nuclease activity without altering cleavage specificity.</text>
</comment>
<comment type="subcellular location">
    <subcellularLocation>
        <location evidence="1">Nucleus</location>
        <location evidence="1">Nucleolus</location>
    </subcellularLocation>
    <subcellularLocation>
        <location evidence="1">Nucleus</location>
        <location evidence="1">Nucleoplasm</location>
    </subcellularLocation>
    <subcellularLocation>
        <location evidence="1">Mitochondrion</location>
    </subcellularLocation>
    <text evidence="1">Resides mostly in the nucleoli and relocalizes to the nucleoplasm upon DNA damage.</text>
</comment>
<comment type="PTM">
    <text evidence="1">Phosphorylated. Phosphorylation upon DNA damage induces relocalization to the nuclear plasma.</text>
</comment>
<comment type="similarity">
    <text evidence="1">Belongs to the XPG/RAD2 endonuclease family. FEN1 subfamily.</text>
</comment>
<organism>
    <name type="scientific">Nematostella vectensis</name>
    <name type="common">Starlet sea anemone</name>
    <dbReference type="NCBI Taxonomy" id="45351"/>
    <lineage>
        <taxon>Eukaryota</taxon>
        <taxon>Metazoa</taxon>
        <taxon>Cnidaria</taxon>
        <taxon>Anthozoa</taxon>
        <taxon>Hexacorallia</taxon>
        <taxon>Actiniaria</taxon>
        <taxon>Edwardsiidae</taxon>
        <taxon>Nematostella</taxon>
    </lineage>
</organism>
<name>FEN1_NEMVE</name>
<gene>
    <name evidence="1" type="primary">FEN1</name>
    <name type="ORF">v1g201054</name>
</gene>
<evidence type="ECO:0000255" key="1">
    <source>
        <dbReference type="HAMAP-Rule" id="MF_03140"/>
    </source>
</evidence>
<evidence type="ECO:0000256" key="2">
    <source>
        <dbReference type="SAM" id="MobiDB-lite"/>
    </source>
</evidence>
<reference key="1">
    <citation type="journal article" date="2007" name="Science">
        <title>Sea anemone genome reveals ancestral eumetazoan gene repertoire and genomic organization.</title>
        <authorList>
            <person name="Putnam N.H."/>
            <person name="Srivastava M."/>
            <person name="Hellsten U."/>
            <person name="Dirks B."/>
            <person name="Chapman J."/>
            <person name="Salamov A."/>
            <person name="Terry A."/>
            <person name="Shapiro H."/>
            <person name="Lindquist E."/>
            <person name="Kapitonov V.V."/>
            <person name="Jurka J."/>
            <person name="Genikhovich G."/>
            <person name="Grigoriev I.V."/>
            <person name="Lucas S.M."/>
            <person name="Steele R.E."/>
            <person name="Finnerty J.R."/>
            <person name="Technau U."/>
            <person name="Martindale M.Q."/>
            <person name="Rokhsar D.S."/>
        </authorList>
    </citation>
    <scope>NUCLEOTIDE SEQUENCE [LARGE SCALE GENOMIC DNA]</scope>
    <source>
        <strain>CH2 X CH6</strain>
    </source>
</reference>